<name>NLTP3_SOLLC</name>
<sequence length="15" mass="1422">ATCSASQLSPCLGAI</sequence>
<keyword id="KW-0020">Allergen</keyword>
<keyword id="KW-0903">Direct protein sequencing</keyword>
<keyword id="KW-0446">Lipid-binding</keyword>
<keyword id="KW-1185">Reference proteome</keyword>
<keyword id="KW-0813">Transport</keyword>
<feature type="chain" id="PRO_0000433405" description="Non-specific lipid-transfer protein">
    <location>
        <begin position="1"/>
        <end position="15"/>
    </location>
</feature>
<feature type="non-terminal residue" evidence="2">
    <location>
        <position position="15"/>
    </location>
</feature>
<reference evidence="4" key="1">
    <citation type="journal article" date="2015" name="Mol. Immunol.">
        <title>Structural features, IgE binding and preliminary clinical findings of the 7kDa Lipid Transfer Protein from tomato seeds.</title>
        <authorList>
            <person name="Giangrieco I."/>
            <person name="Alessandri C."/>
            <person name="Rafaiani C."/>
            <person name="Santoro M."/>
            <person name="Zuzzi S."/>
            <person name="Tuppo L."/>
            <person name="Tamburrini M."/>
            <person name="D'Avino R."/>
            <person name="Ciardiello M.A."/>
            <person name="Mari A."/>
        </authorList>
    </citation>
    <scope>PROTEIN SEQUENCE</scope>
    <scope>MASS SPECTROMETRY</scope>
    <scope>ALLERGEN</scope>
    <source>
        <strain evidence="3">cv. Rosa di Sorrento</strain>
        <tissue evidence="3">Seed</tissue>
    </source>
</reference>
<organism evidence="3">
    <name type="scientific">Solanum lycopersicum</name>
    <name type="common">Tomato</name>
    <name type="synonym">Lycopersicon esculentum</name>
    <dbReference type="NCBI Taxonomy" id="4081"/>
    <lineage>
        <taxon>Eukaryota</taxon>
        <taxon>Viridiplantae</taxon>
        <taxon>Streptophyta</taxon>
        <taxon>Embryophyta</taxon>
        <taxon>Tracheophyta</taxon>
        <taxon>Spermatophyta</taxon>
        <taxon>Magnoliopsida</taxon>
        <taxon>eudicotyledons</taxon>
        <taxon>Gunneridae</taxon>
        <taxon>Pentapetalae</taxon>
        <taxon>asterids</taxon>
        <taxon>lamiids</taxon>
        <taxon>Solanales</taxon>
        <taxon>Solanaceae</taxon>
        <taxon>Solanoideae</taxon>
        <taxon>Solaneae</taxon>
        <taxon>Solanum</taxon>
        <taxon>Solanum subgen. Lycopersicon</taxon>
    </lineage>
</organism>
<evidence type="ECO:0000250" key="1">
    <source>
        <dbReference type="UniProtKB" id="P82007"/>
    </source>
</evidence>
<evidence type="ECO:0000269" key="2">
    <source>
    </source>
</evidence>
<evidence type="ECO:0000303" key="3">
    <source>
    </source>
</evidence>
<evidence type="ECO:0000305" key="4"/>
<accession>P86417</accession>
<proteinExistence type="evidence at protein level"/>
<protein>
    <recommendedName>
        <fullName evidence="1">Non-specific lipid-transfer protein</fullName>
        <shortName evidence="1">LTP</shortName>
        <shortName evidence="1">NsLTP</shortName>
    </recommendedName>
    <alternativeName>
        <fullName evidence="3">7kDa lipid transfer protein</fullName>
        <shortName evidence="3">7k-LTP</shortName>
    </alternativeName>
    <alternativeName>
        <fullName evidence="3">Non-specific lipid-transfer protein 2</fullName>
        <shortName evidence="3">LTP2</shortName>
    </alternativeName>
    <allergenName evidence="3">Sola l 6</allergenName>
</protein>
<dbReference type="STRING" id="4081.P86417"/>
<dbReference type="Allergome" id="11696">
    <property type="allergen name" value="Sola l 6.0101"/>
</dbReference>
<dbReference type="Allergome" id="8215">
    <property type="allergen name" value="Sola l 6"/>
</dbReference>
<dbReference type="InParanoid" id="P86417"/>
<dbReference type="Proteomes" id="UP000004994">
    <property type="component" value="Unplaced"/>
</dbReference>
<dbReference type="GO" id="GO:0008289">
    <property type="term" value="F:lipid binding"/>
    <property type="evidence" value="ECO:0007669"/>
    <property type="project" value="UniProtKB-KW"/>
</dbReference>
<comment type="function">
    <text evidence="1">Plant non-specific lipid-transfer proteins transfer phospholipids as well as galactolipids across membranes. May play a role in wax or cutin deposition in the cell walls of expanding epidermal cells and certain secretory tissues.</text>
</comment>
<comment type="mass spectrometry" mass="7026.0" error="20.0" method="MALDI" evidence="2">
    <text>The measured range is 1-?.</text>
</comment>
<comment type="allergen">
    <text evidence="2">Causes an allergic reaction in human. Binds to IgE.</text>
</comment>
<comment type="similarity">
    <text evidence="4">Belongs to the plant LTP family.</text>
</comment>